<feature type="chain" id="PRO_0000234216" description="Urease subunit gamma">
    <location>
        <begin position="1"/>
        <end position="100"/>
    </location>
</feature>
<organism>
    <name type="scientific">Staphylococcus aureus (strain bovine RF122 / ET3-1)</name>
    <dbReference type="NCBI Taxonomy" id="273036"/>
    <lineage>
        <taxon>Bacteria</taxon>
        <taxon>Bacillati</taxon>
        <taxon>Bacillota</taxon>
        <taxon>Bacilli</taxon>
        <taxon>Bacillales</taxon>
        <taxon>Staphylococcaceae</taxon>
        <taxon>Staphylococcus</taxon>
    </lineage>
</organism>
<reference key="1">
    <citation type="journal article" date="2007" name="PLoS ONE">
        <title>Molecular correlates of host specialization in Staphylococcus aureus.</title>
        <authorList>
            <person name="Herron-Olson L."/>
            <person name="Fitzgerald J.R."/>
            <person name="Musser J.M."/>
            <person name="Kapur V."/>
        </authorList>
    </citation>
    <scope>NUCLEOTIDE SEQUENCE [LARGE SCALE GENOMIC DNA]</scope>
    <source>
        <strain>bovine RF122 / ET3-1</strain>
    </source>
</reference>
<accession>Q2YYQ8</accession>
<protein>
    <recommendedName>
        <fullName evidence="1">Urease subunit gamma</fullName>
        <ecNumber evidence="1">3.5.1.5</ecNumber>
    </recommendedName>
    <alternativeName>
        <fullName evidence="1">Urea amidohydrolase subunit gamma</fullName>
    </alternativeName>
</protein>
<keyword id="KW-0963">Cytoplasm</keyword>
<keyword id="KW-0378">Hydrolase</keyword>
<proteinExistence type="inferred from homology"/>
<comment type="catalytic activity">
    <reaction evidence="1">
        <text>urea + 2 H2O + H(+) = hydrogencarbonate + 2 NH4(+)</text>
        <dbReference type="Rhea" id="RHEA:20557"/>
        <dbReference type="ChEBI" id="CHEBI:15377"/>
        <dbReference type="ChEBI" id="CHEBI:15378"/>
        <dbReference type="ChEBI" id="CHEBI:16199"/>
        <dbReference type="ChEBI" id="CHEBI:17544"/>
        <dbReference type="ChEBI" id="CHEBI:28938"/>
        <dbReference type="EC" id="3.5.1.5"/>
    </reaction>
</comment>
<comment type="pathway">
    <text evidence="1">Nitrogen metabolism; urea degradation; CO(2) and NH(3) from urea (urease route): step 1/1.</text>
</comment>
<comment type="subunit">
    <text evidence="1">Heterotrimer of UreA (gamma), UreB (beta) and UreC (alpha) subunits. Three heterotrimers associate to form the active enzyme.</text>
</comment>
<comment type="subcellular location">
    <subcellularLocation>
        <location evidence="1">Cytoplasm</location>
    </subcellularLocation>
</comment>
<comment type="similarity">
    <text evidence="1">Belongs to the urease gamma subunit family.</text>
</comment>
<evidence type="ECO:0000255" key="1">
    <source>
        <dbReference type="HAMAP-Rule" id="MF_00739"/>
    </source>
</evidence>
<dbReference type="EC" id="3.5.1.5" evidence="1"/>
<dbReference type="EMBL" id="AJ938182">
    <property type="protein sequence ID" value="CAI81849.1"/>
    <property type="molecule type" value="Genomic_DNA"/>
</dbReference>
<dbReference type="RefSeq" id="WP_000545928.1">
    <property type="nucleotide sequence ID" value="NC_007622.1"/>
</dbReference>
<dbReference type="SMR" id="Q2YYQ8"/>
<dbReference type="KEGG" id="sab:SAB2160"/>
<dbReference type="HOGENOM" id="CLU_145825_1_0_9"/>
<dbReference type="UniPathway" id="UPA00258">
    <property type="reaction ID" value="UER00370"/>
</dbReference>
<dbReference type="GO" id="GO:0005737">
    <property type="term" value="C:cytoplasm"/>
    <property type="evidence" value="ECO:0007669"/>
    <property type="project" value="UniProtKB-SubCell"/>
</dbReference>
<dbReference type="GO" id="GO:0016151">
    <property type="term" value="F:nickel cation binding"/>
    <property type="evidence" value="ECO:0007669"/>
    <property type="project" value="InterPro"/>
</dbReference>
<dbReference type="GO" id="GO:0009039">
    <property type="term" value="F:urease activity"/>
    <property type="evidence" value="ECO:0007669"/>
    <property type="project" value="UniProtKB-UniRule"/>
</dbReference>
<dbReference type="GO" id="GO:0043419">
    <property type="term" value="P:urea catabolic process"/>
    <property type="evidence" value="ECO:0007669"/>
    <property type="project" value="UniProtKB-UniRule"/>
</dbReference>
<dbReference type="CDD" id="cd00390">
    <property type="entry name" value="Urease_gamma"/>
    <property type="match status" value="1"/>
</dbReference>
<dbReference type="Gene3D" id="3.30.280.10">
    <property type="entry name" value="Urease, gamma-like subunit"/>
    <property type="match status" value="1"/>
</dbReference>
<dbReference type="HAMAP" id="MF_00739">
    <property type="entry name" value="Urease_gamma"/>
    <property type="match status" value="1"/>
</dbReference>
<dbReference type="InterPro" id="IPR012010">
    <property type="entry name" value="Urease_gamma"/>
</dbReference>
<dbReference type="InterPro" id="IPR002026">
    <property type="entry name" value="Urease_gamma/gamma-beta_su"/>
</dbReference>
<dbReference type="InterPro" id="IPR036463">
    <property type="entry name" value="Urease_gamma_sf"/>
</dbReference>
<dbReference type="InterPro" id="IPR050069">
    <property type="entry name" value="Urease_subunit"/>
</dbReference>
<dbReference type="NCBIfam" id="NF009712">
    <property type="entry name" value="PRK13241.1"/>
    <property type="match status" value="1"/>
</dbReference>
<dbReference type="NCBIfam" id="TIGR00193">
    <property type="entry name" value="urease_gam"/>
    <property type="match status" value="1"/>
</dbReference>
<dbReference type="PANTHER" id="PTHR33569">
    <property type="entry name" value="UREASE"/>
    <property type="match status" value="1"/>
</dbReference>
<dbReference type="PANTHER" id="PTHR33569:SF1">
    <property type="entry name" value="UREASE"/>
    <property type="match status" value="1"/>
</dbReference>
<dbReference type="Pfam" id="PF00547">
    <property type="entry name" value="Urease_gamma"/>
    <property type="match status" value="1"/>
</dbReference>
<dbReference type="PIRSF" id="PIRSF001223">
    <property type="entry name" value="Urease_gamma"/>
    <property type="match status" value="1"/>
</dbReference>
<dbReference type="SUPFAM" id="SSF54111">
    <property type="entry name" value="Urease, gamma-subunit"/>
    <property type="match status" value="1"/>
</dbReference>
<sequence>MHFTQREQDKLMIVVAAEVARRRKARGLKLNHPEALALISDELLEGARDGKTVAELMSYGRQILNKEDVMDGVEHMITDIEIEATFPDGTKLITVHHPIV</sequence>
<gene>
    <name evidence="1" type="primary">ureA</name>
    <name type="ordered locus">SAB2160</name>
</gene>
<name>URE3_STAAB</name>